<evidence type="ECO:0000255" key="1">
    <source>
        <dbReference type="HAMAP-Rule" id="MF_00149"/>
    </source>
</evidence>
<proteinExistence type="inferred from homology"/>
<reference key="1">
    <citation type="journal article" date="2002" name="DNA Res.">
        <title>Complete genomic sequence of nitrogen-fixing symbiotic bacterium Bradyrhizobium japonicum USDA110.</title>
        <authorList>
            <person name="Kaneko T."/>
            <person name="Nakamura Y."/>
            <person name="Sato S."/>
            <person name="Minamisawa K."/>
            <person name="Uchiumi T."/>
            <person name="Sasamoto S."/>
            <person name="Watanabe A."/>
            <person name="Idesawa K."/>
            <person name="Iriguchi M."/>
            <person name="Kawashima K."/>
            <person name="Kohara M."/>
            <person name="Matsumoto M."/>
            <person name="Shimpo S."/>
            <person name="Tsuruoka H."/>
            <person name="Wada T."/>
            <person name="Yamada M."/>
            <person name="Tabata S."/>
        </authorList>
    </citation>
    <scope>NUCLEOTIDE SEQUENCE [LARGE SCALE GENOMIC DNA]</scope>
    <source>
        <strain>JCM 10833 / BCRC 13528 / IAM 13628 / NBRC 14792 / USDA 110</strain>
    </source>
</reference>
<sequence length="603" mass="65365">MPVRQLPEQVVNRIAAGEVVERPASVVKELVENAIDAGASRIDVFTDGGGRRRIGITDDGSGMTAKDLALAVERHATSKLDDEDLLQIRTLGFRGEALPSIGSVARLSITTRHAGEPHAWALTVEGGEKSEIMPAALAHGTRVEVNDLFYATPARLKFLKTDRTEAEAIREVVRRLAMARPDVAFTLAGEERAPVTWAAALPGAAGRLTRLGDILGAEFRSHAIEVHAEREGIVVSGYAAAPALTKANALGQYLFVNGRPVRDKLILGAVRAAYSDYLPRDRHPVLALFVTLDPREVDANVHPAKTEVRFRNAGLVRALIVHGLKEALAREGRRTAANSGESALSSFRPAFTPRPASWDWRASPSAPVAPMPSFDGAAAPAFTERAQAAFDVGAPSADVRFETQPVSDLVDRPLGAARTQIHETYIVSQTRDGLIIVDQHAAHERIVYEGLKASLAANGVQRQILLIPEIVEMDEATVERLLERSDELASFGLAIESFGPGAVAVRETPSLLGKTNAGGLLRDLSEHMAEWDEALPLERRLMHVAATMACHGSVRAGRRLRPEEMNALLREMEETPNSGQCNHGRPTYVELKLSDVEKLFGRR</sequence>
<dbReference type="EMBL" id="BA000040">
    <property type="protein sequence ID" value="BAC52758.1"/>
    <property type="molecule type" value="Genomic_DNA"/>
</dbReference>
<dbReference type="RefSeq" id="NP_774133.1">
    <property type="nucleotide sequence ID" value="NC_004463.1"/>
</dbReference>
<dbReference type="RefSeq" id="WP_011090225.1">
    <property type="nucleotide sequence ID" value="NC_004463.1"/>
</dbReference>
<dbReference type="SMR" id="Q89DE6"/>
<dbReference type="FunCoup" id="Q89DE6">
    <property type="interactions" value="290"/>
</dbReference>
<dbReference type="STRING" id="224911.AAV28_35150"/>
<dbReference type="EnsemblBacteria" id="BAC52758">
    <property type="protein sequence ID" value="BAC52758"/>
    <property type="gene ID" value="BAC52758"/>
</dbReference>
<dbReference type="GeneID" id="46494450"/>
<dbReference type="KEGG" id="bja:blr7493"/>
<dbReference type="PATRIC" id="fig|224911.44.peg.7593"/>
<dbReference type="eggNOG" id="COG0323">
    <property type="taxonomic scope" value="Bacteria"/>
</dbReference>
<dbReference type="HOGENOM" id="CLU_004131_4_2_5"/>
<dbReference type="InParanoid" id="Q89DE6"/>
<dbReference type="OrthoDB" id="9763467at2"/>
<dbReference type="PhylomeDB" id="Q89DE6"/>
<dbReference type="Proteomes" id="UP000002526">
    <property type="component" value="Chromosome"/>
</dbReference>
<dbReference type="GO" id="GO:0032300">
    <property type="term" value="C:mismatch repair complex"/>
    <property type="evidence" value="ECO:0000318"/>
    <property type="project" value="GO_Central"/>
</dbReference>
<dbReference type="GO" id="GO:0005524">
    <property type="term" value="F:ATP binding"/>
    <property type="evidence" value="ECO:0007669"/>
    <property type="project" value="InterPro"/>
</dbReference>
<dbReference type="GO" id="GO:0016887">
    <property type="term" value="F:ATP hydrolysis activity"/>
    <property type="evidence" value="ECO:0000318"/>
    <property type="project" value="GO_Central"/>
</dbReference>
<dbReference type="GO" id="GO:0140664">
    <property type="term" value="F:ATP-dependent DNA damage sensor activity"/>
    <property type="evidence" value="ECO:0007669"/>
    <property type="project" value="InterPro"/>
</dbReference>
<dbReference type="GO" id="GO:0030983">
    <property type="term" value="F:mismatched DNA binding"/>
    <property type="evidence" value="ECO:0007669"/>
    <property type="project" value="InterPro"/>
</dbReference>
<dbReference type="GO" id="GO:0006298">
    <property type="term" value="P:mismatch repair"/>
    <property type="evidence" value="ECO:0000318"/>
    <property type="project" value="GO_Central"/>
</dbReference>
<dbReference type="CDD" id="cd16926">
    <property type="entry name" value="HATPase_MutL-MLH-PMS-like"/>
    <property type="match status" value="1"/>
</dbReference>
<dbReference type="CDD" id="cd00782">
    <property type="entry name" value="MutL_Trans"/>
    <property type="match status" value="1"/>
</dbReference>
<dbReference type="FunFam" id="3.30.565.10:FF:000003">
    <property type="entry name" value="DNA mismatch repair endonuclease MutL"/>
    <property type="match status" value="1"/>
</dbReference>
<dbReference type="Gene3D" id="3.30.230.10">
    <property type="match status" value="1"/>
</dbReference>
<dbReference type="Gene3D" id="3.30.565.10">
    <property type="entry name" value="Histidine kinase-like ATPase, C-terminal domain"/>
    <property type="match status" value="1"/>
</dbReference>
<dbReference type="Gene3D" id="3.30.1540.20">
    <property type="entry name" value="MutL, C-terminal domain, dimerisation subdomain"/>
    <property type="match status" value="1"/>
</dbReference>
<dbReference type="Gene3D" id="3.30.1370.100">
    <property type="entry name" value="MutL, C-terminal domain, regulatory subdomain"/>
    <property type="match status" value="1"/>
</dbReference>
<dbReference type="HAMAP" id="MF_00149">
    <property type="entry name" value="DNA_mis_repair"/>
    <property type="match status" value="1"/>
</dbReference>
<dbReference type="InterPro" id="IPR014762">
    <property type="entry name" value="DNA_mismatch_repair_CS"/>
</dbReference>
<dbReference type="InterPro" id="IPR020667">
    <property type="entry name" value="DNA_mismatch_repair_MutL"/>
</dbReference>
<dbReference type="InterPro" id="IPR013507">
    <property type="entry name" value="DNA_mismatch_S5_2-like"/>
</dbReference>
<dbReference type="InterPro" id="IPR036890">
    <property type="entry name" value="HATPase_C_sf"/>
</dbReference>
<dbReference type="InterPro" id="IPR002099">
    <property type="entry name" value="MutL/Mlh/PMS"/>
</dbReference>
<dbReference type="InterPro" id="IPR038973">
    <property type="entry name" value="MutL/Mlh/Pms-like"/>
</dbReference>
<dbReference type="InterPro" id="IPR014790">
    <property type="entry name" value="MutL_C"/>
</dbReference>
<dbReference type="InterPro" id="IPR042120">
    <property type="entry name" value="MutL_C_dimsub"/>
</dbReference>
<dbReference type="InterPro" id="IPR042121">
    <property type="entry name" value="MutL_C_regsub"/>
</dbReference>
<dbReference type="InterPro" id="IPR037198">
    <property type="entry name" value="MutL_C_sf"/>
</dbReference>
<dbReference type="InterPro" id="IPR020568">
    <property type="entry name" value="Ribosomal_Su5_D2-typ_SF"/>
</dbReference>
<dbReference type="InterPro" id="IPR014721">
    <property type="entry name" value="Ribsml_uS5_D2-typ_fold_subgr"/>
</dbReference>
<dbReference type="NCBIfam" id="TIGR00585">
    <property type="entry name" value="mutl"/>
    <property type="match status" value="1"/>
</dbReference>
<dbReference type="NCBIfam" id="NF000953">
    <property type="entry name" value="PRK00095.2-4"/>
    <property type="match status" value="1"/>
</dbReference>
<dbReference type="PANTHER" id="PTHR10073">
    <property type="entry name" value="DNA MISMATCH REPAIR PROTEIN MLH, PMS, MUTL"/>
    <property type="match status" value="1"/>
</dbReference>
<dbReference type="PANTHER" id="PTHR10073:SF12">
    <property type="entry name" value="DNA MISMATCH REPAIR PROTEIN MLH1"/>
    <property type="match status" value="1"/>
</dbReference>
<dbReference type="Pfam" id="PF01119">
    <property type="entry name" value="DNA_mis_repair"/>
    <property type="match status" value="1"/>
</dbReference>
<dbReference type="Pfam" id="PF13589">
    <property type="entry name" value="HATPase_c_3"/>
    <property type="match status" value="1"/>
</dbReference>
<dbReference type="Pfam" id="PF08676">
    <property type="entry name" value="MutL_C"/>
    <property type="match status" value="1"/>
</dbReference>
<dbReference type="SMART" id="SM01340">
    <property type="entry name" value="DNA_mis_repair"/>
    <property type="match status" value="1"/>
</dbReference>
<dbReference type="SMART" id="SM00853">
    <property type="entry name" value="MutL_C"/>
    <property type="match status" value="1"/>
</dbReference>
<dbReference type="SUPFAM" id="SSF55874">
    <property type="entry name" value="ATPase domain of HSP90 chaperone/DNA topoisomerase II/histidine kinase"/>
    <property type="match status" value="1"/>
</dbReference>
<dbReference type="SUPFAM" id="SSF118116">
    <property type="entry name" value="DNA mismatch repair protein MutL"/>
    <property type="match status" value="1"/>
</dbReference>
<dbReference type="SUPFAM" id="SSF54211">
    <property type="entry name" value="Ribosomal protein S5 domain 2-like"/>
    <property type="match status" value="1"/>
</dbReference>
<dbReference type="PROSITE" id="PS00058">
    <property type="entry name" value="DNA_MISMATCH_REPAIR_1"/>
    <property type="match status" value="1"/>
</dbReference>
<protein>
    <recommendedName>
        <fullName evidence="1">DNA mismatch repair protein MutL</fullName>
    </recommendedName>
</protein>
<keyword id="KW-0227">DNA damage</keyword>
<keyword id="KW-0234">DNA repair</keyword>
<keyword id="KW-1185">Reference proteome</keyword>
<feature type="chain" id="PRO_1000009994" description="DNA mismatch repair protein MutL">
    <location>
        <begin position="1"/>
        <end position="603"/>
    </location>
</feature>
<comment type="function">
    <text evidence="1">This protein is involved in the repair of mismatches in DNA. It is required for dam-dependent methyl-directed DNA mismatch repair. May act as a 'molecular matchmaker', a protein that promotes the formation of a stable complex between two or more DNA-binding proteins in an ATP-dependent manner without itself being part of a final effector complex.</text>
</comment>
<comment type="similarity">
    <text evidence="1">Belongs to the DNA mismatch repair MutL/HexB family.</text>
</comment>
<gene>
    <name evidence="1" type="primary">mutL</name>
    <name type="ordered locus">blr7493</name>
</gene>
<name>MUTL_BRADU</name>
<accession>Q89DE6</accession>
<organism>
    <name type="scientific">Bradyrhizobium diazoefficiens (strain JCM 10833 / BCRC 13528 / IAM 13628 / NBRC 14792 / USDA 110)</name>
    <dbReference type="NCBI Taxonomy" id="224911"/>
    <lineage>
        <taxon>Bacteria</taxon>
        <taxon>Pseudomonadati</taxon>
        <taxon>Pseudomonadota</taxon>
        <taxon>Alphaproteobacteria</taxon>
        <taxon>Hyphomicrobiales</taxon>
        <taxon>Nitrobacteraceae</taxon>
        <taxon>Bradyrhizobium</taxon>
    </lineage>
</organism>